<comment type="function">
    <text evidence="1">One of the primary rRNA binding proteins, this protein initially binds near the 5'-end of the 23S rRNA. It is important during the early stages of 50S assembly. It makes multiple contacts with different domains of the 23S rRNA in the assembled 50S subunit and ribosome.</text>
</comment>
<comment type="function">
    <text evidence="1">Forms part of the polypeptide exit tunnel.</text>
</comment>
<comment type="subunit">
    <text evidence="1">Part of the 50S ribosomal subunit.</text>
</comment>
<comment type="similarity">
    <text evidence="1">Belongs to the universal ribosomal protein uL4 family.</text>
</comment>
<keyword id="KW-1185">Reference proteome</keyword>
<keyword id="KW-0687">Ribonucleoprotein</keyword>
<keyword id="KW-0689">Ribosomal protein</keyword>
<keyword id="KW-0694">RNA-binding</keyword>
<keyword id="KW-0699">rRNA-binding</keyword>
<name>RL4_ZYMMO</name>
<dbReference type="EMBL" id="AE008692">
    <property type="protein sequence ID" value="AAV89142.1"/>
    <property type="molecule type" value="Genomic_DNA"/>
</dbReference>
<dbReference type="RefSeq" id="WP_011240424.1">
    <property type="nucleotide sequence ID" value="NZ_CP035711.1"/>
</dbReference>
<dbReference type="SMR" id="Q5NQ63"/>
<dbReference type="STRING" id="264203.ZMO0518"/>
<dbReference type="GeneID" id="79904291"/>
<dbReference type="KEGG" id="zmo:ZMO0518"/>
<dbReference type="eggNOG" id="COG0088">
    <property type="taxonomic scope" value="Bacteria"/>
</dbReference>
<dbReference type="HOGENOM" id="CLU_041575_5_1_5"/>
<dbReference type="Proteomes" id="UP000001173">
    <property type="component" value="Chromosome"/>
</dbReference>
<dbReference type="GO" id="GO:1990904">
    <property type="term" value="C:ribonucleoprotein complex"/>
    <property type="evidence" value="ECO:0007669"/>
    <property type="project" value="UniProtKB-KW"/>
</dbReference>
<dbReference type="GO" id="GO:0005840">
    <property type="term" value="C:ribosome"/>
    <property type="evidence" value="ECO:0007669"/>
    <property type="project" value="UniProtKB-KW"/>
</dbReference>
<dbReference type="GO" id="GO:0019843">
    <property type="term" value="F:rRNA binding"/>
    <property type="evidence" value="ECO:0007669"/>
    <property type="project" value="UniProtKB-UniRule"/>
</dbReference>
<dbReference type="GO" id="GO:0003735">
    <property type="term" value="F:structural constituent of ribosome"/>
    <property type="evidence" value="ECO:0007669"/>
    <property type="project" value="InterPro"/>
</dbReference>
<dbReference type="GO" id="GO:0006412">
    <property type="term" value="P:translation"/>
    <property type="evidence" value="ECO:0007669"/>
    <property type="project" value="UniProtKB-UniRule"/>
</dbReference>
<dbReference type="Gene3D" id="3.40.1370.10">
    <property type="match status" value="1"/>
</dbReference>
<dbReference type="HAMAP" id="MF_01328_B">
    <property type="entry name" value="Ribosomal_uL4_B"/>
    <property type="match status" value="1"/>
</dbReference>
<dbReference type="InterPro" id="IPR002136">
    <property type="entry name" value="Ribosomal_uL4"/>
</dbReference>
<dbReference type="InterPro" id="IPR013005">
    <property type="entry name" value="Ribosomal_uL4-like"/>
</dbReference>
<dbReference type="InterPro" id="IPR023574">
    <property type="entry name" value="Ribosomal_uL4_dom_sf"/>
</dbReference>
<dbReference type="NCBIfam" id="TIGR03953">
    <property type="entry name" value="rplD_bact"/>
    <property type="match status" value="1"/>
</dbReference>
<dbReference type="PANTHER" id="PTHR10746">
    <property type="entry name" value="50S RIBOSOMAL PROTEIN L4"/>
    <property type="match status" value="1"/>
</dbReference>
<dbReference type="PANTHER" id="PTHR10746:SF6">
    <property type="entry name" value="LARGE RIBOSOMAL SUBUNIT PROTEIN UL4M"/>
    <property type="match status" value="1"/>
</dbReference>
<dbReference type="Pfam" id="PF00573">
    <property type="entry name" value="Ribosomal_L4"/>
    <property type="match status" value="1"/>
</dbReference>
<dbReference type="SUPFAM" id="SSF52166">
    <property type="entry name" value="Ribosomal protein L4"/>
    <property type="match status" value="1"/>
</dbReference>
<gene>
    <name evidence="1" type="primary">rplD</name>
    <name type="ordered locus">ZMO0518</name>
</gene>
<sequence length="207" mass="22281">MKVEVQSLDASKKGSIELNDAVFGIEPRADILHRVVTWQLEKRRAPTRATRERSDVARSGKKFGRQKGGGTARHGDRRSPIFIGGGKAHGARARVFNPSLNKKVRALGLRMALSSKAKTGTLVVIEALDVEAKTKLLAAQIQSLGFGPKVLVVDGDTVNENFARASSNLVGLDVLPAVGANVYDILKHDTLVLTRAAVEKLEARLNG</sequence>
<accession>Q5NQ63</accession>
<protein>
    <recommendedName>
        <fullName evidence="1">Large ribosomal subunit protein uL4</fullName>
    </recommendedName>
    <alternativeName>
        <fullName evidence="3">50S ribosomal protein L4</fullName>
    </alternativeName>
</protein>
<evidence type="ECO:0000255" key="1">
    <source>
        <dbReference type="HAMAP-Rule" id="MF_01328"/>
    </source>
</evidence>
<evidence type="ECO:0000256" key="2">
    <source>
        <dbReference type="SAM" id="MobiDB-lite"/>
    </source>
</evidence>
<evidence type="ECO:0000305" key="3"/>
<proteinExistence type="inferred from homology"/>
<organism>
    <name type="scientific">Zymomonas mobilis subsp. mobilis (strain ATCC 31821 / ZM4 / CP4)</name>
    <dbReference type="NCBI Taxonomy" id="264203"/>
    <lineage>
        <taxon>Bacteria</taxon>
        <taxon>Pseudomonadati</taxon>
        <taxon>Pseudomonadota</taxon>
        <taxon>Alphaproteobacteria</taxon>
        <taxon>Sphingomonadales</taxon>
        <taxon>Zymomonadaceae</taxon>
        <taxon>Zymomonas</taxon>
    </lineage>
</organism>
<feature type="chain" id="PRO_0000242465" description="Large ribosomal subunit protein uL4">
    <location>
        <begin position="1"/>
        <end position="207"/>
    </location>
</feature>
<feature type="region of interest" description="Disordered" evidence="2">
    <location>
        <begin position="44"/>
        <end position="82"/>
    </location>
</feature>
<feature type="compositionally biased region" description="Basic and acidic residues" evidence="2">
    <location>
        <begin position="44"/>
        <end position="58"/>
    </location>
</feature>
<reference key="1">
    <citation type="journal article" date="2005" name="Nat. Biotechnol.">
        <title>The genome sequence of the ethanologenic bacterium Zymomonas mobilis ZM4.</title>
        <authorList>
            <person name="Seo J.-S."/>
            <person name="Chong H."/>
            <person name="Park H.S."/>
            <person name="Yoon K.-O."/>
            <person name="Jung C."/>
            <person name="Kim J.J."/>
            <person name="Hong J.H."/>
            <person name="Kim H."/>
            <person name="Kim J.-H."/>
            <person name="Kil J.-I."/>
            <person name="Park C.J."/>
            <person name="Oh H.-M."/>
            <person name="Lee J.-S."/>
            <person name="Jin S.-J."/>
            <person name="Um H.-W."/>
            <person name="Lee H.-J."/>
            <person name="Oh S.-J."/>
            <person name="Kim J.Y."/>
            <person name="Kang H.L."/>
            <person name="Lee S.Y."/>
            <person name="Lee K.J."/>
            <person name="Kang H.S."/>
        </authorList>
    </citation>
    <scope>NUCLEOTIDE SEQUENCE [LARGE SCALE GENOMIC DNA]</scope>
    <source>
        <strain>ATCC 31821 / ZM4 / CP4</strain>
    </source>
</reference>